<keyword id="KW-1185">Reference proteome</keyword>
<name>Y1075_AQUAE</name>
<gene>
    <name type="ordered locus">aq_1075</name>
</gene>
<proteinExistence type="predicted"/>
<accession>O67169</accession>
<feature type="chain" id="PRO_0000186898" description="Uncharacterized protein aq_1075">
    <location>
        <begin position="1"/>
        <end position="165"/>
    </location>
</feature>
<dbReference type="EMBL" id="AE000657">
    <property type="protein sequence ID" value="AAC07132.1"/>
    <property type="molecule type" value="Genomic_DNA"/>
</dbReference>
<dbReference type="PIR" id="F70392">
    <property type="entry name" value="F70392"/>
</dbReference>
<dbReference type="RefSeq" id="NP_213732.1">
    <property type="nucleotide sequence ID" value="NC_000918.1"/>
</dbReference>
<dbReference type="RefSeq" id="WP_010880670.1">
    <property type="nucleotide sequence ID" value="NC_000918.1"/>
</dbReference>
<dbReference type="STRING" id="224324.aq_1075"/>
<dbReference type="EnsemblBacteria" id="AAC07132">
    <property type="protein sequence ID" value="AAC07132"/>
    <property type="gene ID" value="aq_1075"/>
</dbReference>
<dbReference type="KEGG" id="aae:aq_1075"/>
<dbReference type="HOGENOM" id="CLU_1607462_0_0_0"/>
<dbReference type="InParanoid" id="O67169"/>
<dbReference type="Proteomes" id="UP000000798">
    <property type="component" value="Chromosome"/>
</dbReference>
<organism>
    <name type="scientific">Aquifex aeolicus (strain VF5)</name>
    <dbReference type="NCBI Taxonomy" id="224324"/>
    <lineage>
        <taxon>Bacteria</taxon>
        <taxon>Pseudomonadati</taxon>
        <taxon>Aquificota</taxon>
        <taxon>Aquificia</taxon>
        <taxon>Aquificales</taxon>
        <taxon>Aquificaceae</taxon>
        <taxon>Aquifex</taxon>
    </lineage>
</organism>
<reference key="1">
    <citation type="journal article" date="1998" name="Nature">
        <title>The complete genome of the hyperthermophilic bacterium Aquifex aeolicus.</title>
        <authorList>
            <person name="Deckert G."/>
            <person name="Warren P.V."/>
            <person name="Gaasterland T."/>
            <person name="Young W.G."/>
            <person name="Lenox A.L."/>
            <person name="Graham D.E."/>
            <person name="Overbeek R."/>
            <person name="Snead M.A."/>
            <person name="Keller M."/>
            <person name="Aujay M."/>
            <person name="Huber R."/>
            <person name="Feldman R.A."/>
            <person name="Short J.M."/>
            <person name="Olsen G.J."/>
            <person name="Swanson R.V."/>
        </authorList>
    </citation>
    <scope>NUCLEOTIDE SEQUENCE [LARGE SCALE GENOMIC DNA]</scope>
    <source>
        <strain>VF5</strain>
    </source>
</reference>
<sequence length="165" mass="19532">MEKTYKLPIVLGTDPENTIRIDKLPPLKGAFAVHIHESETENNAHIKLEYGDTEYCLSLYVFNYPKFLRNETVRVRNYDLWPKWIMFAARLPNGKLHPKSGGKVYREDAVIVGEGNYELENPFISFKYSDGRILNFRIEFYRYLRYKSPKYGPSFRSEYWFIGVD</sequence>
<protein>
    <recommendedName>
        <fullName>Uncharacterized protein aq_1075</fullName>
    </recommendedName>
</protein>